<reference key="1">
    <citation type="submission" date="2004-11" db="EMBL/GenBank/DDBJ databases">
        <authorList>
            <consortium name="The German cDNA consortium"/>
        </authorList>
    </citation>
    <scope>NUCLEOTIDE SEQUENCE [LARGE SCALE MRNA]</scope>
    <source>
        <tissue>Liver</tissue>
    </source>
</reference>
<keyword id="KW-0007">Acetylation</keyword>
<keyword id="KW-0325">Glycoprotein</keyword>
<keyword id="KW-0496">Mitochondrion</keyword>
<keyword id="KW-0520">NAD</keyword>
<keyword id="KW-0560">Oxidoreductase</keyword>
<keyword id="KW-0597">Phosphoprotein</keyword>
<keyword id="KW-1185">Reference proteome</keyword>
<keyword id="KW-0809">Transit peptide</keyword>
<keyword id="KW-0816">Tricarboxylic acid cycle</keyword>
<name>MDHM_PONAB</name>
<feature type="transit peptide" description="Mitochondrion" evidence="1">
    <location>
        <begin position="1"/>
        <end position="24"/>
    </location>
</feature>
<feature type="chain" id="PRO_0000285044" description="Malate dehydrogenase, mitochondrial">
    <location>
        <begin position="25"/>
        <end position="338"/>
    </location>
</feature>
<feature type="active site" description="Proton acceptor" evidence="1">
    <location>
        <position position="200"/>
    </location>
</feature>
<feature type="binding site" evidence="4">
    <location>
        <begin position="31"/>
        <end position="37"/>
    </location>
    <ligand>
        <name>NAD(+)</name>
        <dbReference type="ChEBI" id="CHEBI:57540"/>
    </ligand>
</feature>
<feature type="binding site" evidence="4">
    <location>
        <position position="57"/>
    </location>
    <ligand>
        <name>NAD(+)</name>
        <dbReference type="ChEBI" id="CHEBI:57540"/>
    </ligand>
</feature>
<feature type="binding site" evidence="6">
    <location>
        <position position="104"/>
    </location>
    <ligand>
        <name>substrate</name>
    </ligand>
</feature>
<feature type="binding site" evidence="6">
    <location>
        <position position="110"/>
    </location>
    <ligand>
        <name>substrate</name>
    </ligand>
</feature>
<feature type="binding site" evidence="4">
    <location>
        <position position="117"/>
    </location>
    <ligand>
        <name>NAD(+)</name>
        <dbReference type="ChEBI" id="CHEBI:57540"/>
    </ligand>
</feature>
<feature type="binding site" evidence="4">
    <location>
        <begin position="140"/>
        <end position="142"/>
    </location>
    <ligand>
        <name>NAD(+)</name>
        <dbReference type="ChEBI" id="CHEBI:57540"/>
    </ligand>
</feature>
<feature type="binding site" evidence="6">
    <location>
        <position position="142"/>
    </location>
    <ligand>
        <name>substrate</name>
    </ligand>
</feature>
<feature type="binding site" evidence="6">
    <location>
        <position position="176"/>
    </location>
    <ligand>
        <name>substrate</name>
    </ligand>
</feature>
<feature type="binding site" evidence="4">
    <location>
        <position position="251"/>
    </location>
    <ligand>
        <name>NAD(+)</name>
        <dbReference type="ChEBI" id="CHEBI:57540"/>
    </ligand>
</feature>
<feature type="modified residue" description="N6-acetyllysine; alternate" evidence="3">
    <location>
        <position position="78"/>
    </location>
</feature>
<feature type="modified residue" description="N6-succinyllysine; alternate" evidence="3">
    <location>
        <position position="78"/>
    </location>
</feature>
<feature type="modified residue" description="N6-acetyllysine; alternate" evidence="3">
    <location>
        <position position="91"/>
    </location>
</feature>
<feature type="modified residue" description="N6-succinyllysine; alternate" evidence="3">
    <location>
        <position position="91"/>
    </location>
</feature>
<feature type="modified residue" description="N6-acetyllysine" evidence="4">
    <location>
        <position position="165"/>
    </location>
</feature>
<feature type="modified residue" description="N6-acetyllysine; alternate" evidence="5">
    <location>
        <position position="185"/>
    </location>
</feature>
<feature type="modified residue" description="N6-succinyllysine; alternate" evidence="3">
    <location>
        <position position="185"/>
    </location>
</feature>
<feature type="modified residue" description="N6-succinyllysine" evidence="3">
    <location>
        <position position="203"/>
    </location>
</feature>
<feature type="modified residue" description="N6-acetyllysine; alternate" evidence="3">
    <location>
        <position position="215"/>
    </location>
</feature>
<feature type="modified residue" description="N6-succinyllysine; alternate" evidence="3">
    <location>
        <position position="215"/>
    </location>
</feature>
<feature type="modified residue" description="N6-acetyllysine; alternate" evidence="3">
    <location>
        <position position="239"/>
    </location>
</feature>
<feature type="modified residue" description="N6-malonyllysine; alternate" evidence="5">
    <location>
        <position position="239"/>
    </location>
</feature>
<feature type="modified residue" description="N6-succinyllysine; alternate" evidence="5">
    <location>
        <position position="239"/>
    </location>
</feature>
<feature type="modified residue" description="Phosphoserine" evidence="4">
    <location>
        <position position="246"/>
    </location>
</feature>
<feature type="modified residue" description="N6-succinyllysine" evidence="3">
    <location>
        <position position="269"/>
    </location>
</feature>
<feature type="modified residue" description="N6-acetyllysine; alternate" evidence="3">
    <location>
        <position position="296"/>
    </location>
</feature>
<feature type="modified residue" description="N6-succinyllysine; alternate" evidence="3">
    <location>
        <position position="296"/>
    </location>
</feature>
<feature type="modified residue" description="N6-acetyllysine; alternate" evidence="4">
    <location>
        <position position="301"/>
    </location>
</feature>
<feature type="modified residue" description="N6-succinyllysine; alternate" evidence="5">
    <location>
        <position position="301"/>
    </location>
</feature>
<feature type="modified residue" description="N6-acetyllysine; alternate" evidence="5">
    <location>
        <position position="307"/>
    </location>
</feature>
<feature type="modified residue" description="N6-malonyllysine; alternate" evidence="4">
    <location>
        <position position="307"/>
    </location>
</feature>
<feature type="modified residue" description="N6-succinyllysine; alternate" evidence="3">
    <location>
        <position position="307"/>
    </location>
</feature>
<feature type="modified residue" description="N6-acetyllysine; alternate" evidence="5">
    <location>
        <position position="314"/>
    </location>
</feature>
<feature type="modified residue" description="N6-succinyllysine; alternate" evidence="3">
    <location>
        <position position="314"/>
    </location>
</feature>
<feature type="modified residue" description="N6-acetyllysine; alternate" evidence="3">
    <location>
        <position position="324"/>
    </location>
</feature>
<feature type="modified residue" description="N6-succinyllysine; alternate" evidence="3">
    <location>
        <position position="324"/>
    </location>
</feature>
<feature type="modified residue" description="Phosphoserine" evidence="4">
    <location>
        <position position="326"/>
    </location>
</feature>
<feature type="modified residue" description="N6-acetyllysine; alternate" evidence="5">
    <location>
        <position position="328"/>
    </location>
</feature>
<feature type="modified residue" description="N6-succinyllysine; alternate" evidence="5">
    <location>
        <position position="328"/>
    </location>
</feature>
<feature type="modified residue" description="N6-acetyllysine; alternate" evidence="4">
    <location>
        <position position="329"/>
    </location>
</feature>
<feature type="modified residue" description="N6-malonyllysine; alternate" evidence="5">
    <location>
        <position position="329"/>
    </location>
</feature>
<feature type="modified residue" description="N6-acetyllysine; alternate" evidence="4">
    <location>
        <position position="335"/>
    </location>
</feature>
<feature type="modified residue" description="N6-succinyllysine; alternate" evidence="3">
    <location>
        <position position="335"/>
    </location>
</feature>
<feature type="glycosylation site" description="O-linked (GlcNAc) serine" evidence="2">
    <location>
        <position position="33"/>
    </location>
</feature>
<gene>
    <name type="primary">MDH2</name>
</gene>
<evidence type="ECO:0000250" key="1">
    <source>
        <dbReference type="UniProtKB" id="P00346"/>
    </source>
</evidence>
<evidence type="ECO:0000250" key="2">
    <source>
        <dbReference type="UniProtKB" id="P04636"/>
    </source>
</evidence>
<evidence type="ECO:0000250" key="3">
    <source>
        <dbReference type="UniProtKB" id="P08249"/>
    </source>
</evidence>
<evidence type="ECO:0000250" key="4">
    <source>
        <dbReference type="UniProtKB" id="P40926"/>
    </source>
</evidence>
<evidence type="ECO:0000250" key="5">
    <source>
        <dbReference type="UniProtKB" id="Q32LG3"/>
    </source>
</evidence>
<evidence type="ECO:0000255" key="6">
    <source>
        <dbReference type="PROSITE-ProRule" id="PRU10004"/>
    </source>
</evidence>
<evidence type="ECO:0000305" key="7"/>
<protein>
    <recommendedName>
        <fullName>Malate dehydrogenase, mitochondrial</fullName>
        <ecNumber>1.1.1.37</ecNumber>
    </recommendedName>
</protein>
<comment type="catalytic activity">
    <reaction evidence="6">
        <text>(S)-malate + NAD(+) = oxaloacetate + NADH + H(+)</text>
        <dbReference type="Rhea" id="RHEA:21432"/>
        <dbReference type="ChEBI" id="CHEBI:15378"/>
        <dbReference type="ChEBI" id="CHEBI:15589"/>
        <dbReference type="ChEBI" id="CHEBI:16452"/>
        <dbReference type="ChEBI" id="CHEBI:57540"/>
        <dbReference type="ChEBI" id="CHEBI:57945"/>
        <dbReference type="EC" id="1.1.1.37"/>
    </reaction>
</comment>
<comment type="activity regulation">
    <text evidence="4">Enzyme activity is enhanced by acetylation.</text>
</comment>
<comment type="subunit">
    <text evidence="1">Homodimer.</text>
</comment>
<comment type="subcellular location">
    <subcellularLocation>
        <location evidence="2">Mitochondrion matrix</location>
    </subcellularLocation>
</comment>
<comment type="PTM">
    <text evidence="4">Acetylation is enhanced after treatment either with trichostin A (TCA) or with nicotinamide (NAM) with the appearance of tri- and tetraacetylations. Glucose also increases acetylation.</text>
</comment>
<comment type="similarity">
    <text evidence="7">Belongs to the LDH/MDH superfamily. MDH type 1 family.</text>
</comment>
<accession>Q5NVR2</accession>
<dbReference type="EC" id="1.1.1.37"/>
<dbReference type="EMBL" id="CR925943">
    <property type="protein sequence ID" value="CAI29601.1"/>
    <property type="molecule type" value="mRNA"/>
</dbReference>
<dbReference type="RefSeq" id="NP_001127677.1">
    <property type="nucleotide sequence ID" value="NM_001134205.1"/>
</dbReference>
<dbReference type="SMR" id="Q5NVR2"/>
<dbReference type="FunCoup" id="Q5NVR2">
    <property type="interactions" value="2405"/>
</dbReference>
<dbReference type="STRING" id="9601.ENSPPYP00000019586"/>
<dbReference type="GlyCosmos" id="Q5NVR2">
    <property type="glycosylation" value="1 site, No reported glycans"/>
</dbReference>
<dbReference type="GeneID" id="100174759"/>
<dbReference type="KEGG" id="pon:100174759"/>
<dbReference type="CTD" id="4191"/>
<dbReference type="eggNOG" id="KOG1494">
    <property type="taxonomic scope" value="Eukaryota"/>
</dbReference>
<dbReference type="InParanoid" id="Q5NVR2"/>
<dbReference type="OrthoDB" id="755699at2759"/>
<dbReference type="Proteomes" id="UP000001595">
    <property type="component" value="Unplaced"/>
</dbReference>
<dbReference type="GO" id="GO:0005759">
    <property type="term" value="C:mitochondrial matrix"/>
    <property type="evidence" value="ECO:0000250"/>
    <property type="project" value="UniProtKB"/>
</dbReference>
<dbReference type="GO" id="GO:0030060">
    <property type="term" value="F:L-malate dehydrogenase (NAD+) activity"/>
    <property type="evidence" value="ECO:0000250"/>
    <property type="project" value="UniProtKB"/>
</dbReference>
<dbReference type="GO" id="GO:0042803">
    <property type="term" value="F:protein homodimerization activity"/>
    <property type="evidence" value="ECO:0000250"/>
    <property type="project" value="UniProtKB"/>
</dbReference>
<dbReference type="GO" id="GO:0009060">
    <property type="term" value="P:aerobic respiration"/>
    <property type="evidence" value="ECO:0000250"/>
    <property type="project" value="UniProtKB"/>
</dbReference>
<dbReference type="GO" id="GO:0006108">
    <property type="term" value="P:malate metabolic process"/>
    <property type="evidence" value="ECO:0007669"/>
    <property type="project" value="InterPro"/>
</dbReference>
<dbReference type="GO" id="GO:0006734">
    <property type="term" value="P:NADH metabolic process"/>
    <property type="evidence" value="ECO:0007669"/>
    <property type="project" value="UniProtKB-ARBA"/>
</dbReference>
<dbReference type="GO" id="GO:0006099">
    <property type="term" value="P:tricarboxylic acid cycle"/>
    <property type="evidence" value="ECO:0007669"/>
    <property type="project" value="UniProtKB-KW"/>
</dbReference>
<dbReference type="CDD" id="cd01337">
    <property type="entry name" value="MDH_glyoxysomal_mitochondrial"/>
    <property type="match status" value="1"/>
</dbReference>
<dbReference type="FunFam" id="3.40.50.720:FF:000013">
    <property type="entry name" value="Malate dehydrogenase"/>
    <property type="match status" value="1"/>
</dbReference>
<dbReference type="FunFam" id="3.90.110.10:FF:000001">
    <property type="entry name" value="Malate dehydrogenase"/>
    <property type="match status" value="1"/>
</dbReference>
<dbReference type="Gene3D" id="3.90.110.10">
    <property type="entry name" value="Lactate dehydrogenase/glycoside hydrolase, family 4, C-terminal"/>
    <property type="match status" value="1"/>
</dbReference>
<dbReference type="Gene3D" id="3.40.50.720">
    <property type="entry name" value="NAD(P)-binding Rossmann-like Domain"/>
    <property type="match status" value="1"/>
</dbReference>
<dbReference type="InterPro" id="IPR001557">
    <property type="entry name" value="L-lactate/malate_DH"/>
</dbReference>
<dbReference type="InterPro" id="IPR022383">
    <property type="entry name" value="Lactate/malate_DH_C"/>
</dbReference>
<dbReference type="InterPro" id="IPR001236">
    <property type="entry name" value="Lactate/malate_DH_N"/>
</dbReference>
<dbReference type="InterPro" id="IPR015955">
    <property type="entry name" value="Lactate_DH/Glyco_Ohase_4_C"/>
</dbReference>
<dbReference type="InterPro" id="IPR001252">
    <property type="entry name" value="Malate_DH_AS"/>
</dbReference>
<dbReference type="InterPro" id="IPR010097">
    <property type="entry name" value="Malate_DH_type1"/>
</dbReference>
<dbReference type="InterPro" id="IPR036291">
    <property type="entry name" value="NAD(P)-bd_dom_sf"/>
</dbReference>
<dbReference type="NCBIfam" id="TIGR01772">
    <property type="entry name" value="MDH_euk_gproteo"/>
    <property type="match status" value="1"/>
</dbReference>
<dbReference type="PANTHER" id="PTHR11540">
    <property type="entry name" value="MALATE AND LACTATE DEHYDROGENASE"/>
    <property type="match status" value="1"/>
</dbReference>
<dbReference type="PANTHER" id="PTHR11540:SF16">
    <property type="entry name" value="MALATE DEHYDROGENASE, MITOCHONDRIAL"/>
    <property type="match status" value="1"/>
</dbReference>
<dbReference type="Pfam" id="PF02866">
    <property type="entry name" value="Ldh_1_C"/>
    <property type="match status" value="1"/>
</dbReference>
<dbReference type="Pfam" id="PF00056">
    <property type="entry name" value="Ldh_1_N"/>
    <property type="match status" value="1"/>
</dbReference>
<dbReference type="PIRSF" id="PIRSF000102">
    <property type="entry name" value="Lac_mal_DH"/>
    <property type="match status" value="1"/>
</dbReference>
<dbReference type="SUPFAM" id="SSF56327">
    <property type="entry name" value="LDH C-terminal domain-like"/>
    <property type="match status" value="1"/>
</dbReference>
<dbReference type="SUPFAM" id="SSF51735">
    <property type="entry name" value="NAD(P)-binding Rossmann-fold domains"/>
    <property type="match status" value="1"/>
</dbReference>
<dbReference type="PROSITE" id="PS00068">
    <property type="entry name" value="MDH"/>
    <property type="match status" value="1"/>
</dbReference>
<sequence>MLSALARPASAVLRRSFSTSAQNNAKVAVLGASGGIGQPLSLLLKNSPLVSRLTLYDIAHTPGVAADLSHIETKATVKGYLGPEQLPDCLKGCDVVVIPAGVPRKPGMTRDDLFNTNATIVATLTSACAQHCPEAMICVIANPVNSTIPITAEVFKKHGVYNPNKIFGVTTLDIVRANTFVAELKGLDPARVNVPVIGGHAGKTIIPLISQCTPKVDFPQDQLTALTGRIQEAGTEVVKAKAGAGSATLSMAYAGARFVFSLVDAMNGKEGVVECSFVKSQETECTYFSTPLLLGKKGIEKNLGIGKVSSFEEKMISDAIPELKASIKKGEDFVKTLK</sequence>
<proteinExistence type="evidence at transcript level"/>
<organism>
    <name type="scientific">Pongo abelii</name>
    <name type="common">Sumatran orangutan</name>
    <name type="synonym">Pongo pygmaeus abelii</name>
    <dbReference type="NCBI Taxonomy" id="9601"/>
    <lineage>
        <taxon>Eukaryota</taxon>
        <taxon>Metazoa</taxon>
        <taxon>Chordata</taxon>
        <taxon>Craniata</taxon>
        <taxon>Vertebrata</taxon>
        <taxon>Euteleostomi</taxon>
        <taxon>Mammalia</taxon>
        <taxon>Eutheria</taxon>
        <taxon>Euarchontoglires</taxon>
        <taxon>Primates</taxon>
        <taxon>Haplorrhini</taxon>
        <taxon>Catarrhini</taxon>
        <taxon>Hominidae</taxon>
        <taxon>Pongo</taxon>
    </lineage>
</organism>